<name>FRM2_YEAST</name>
<keyword id="KW-0002">3D-structure</keyword>
<keyword id="KW-0963">Cytoplasm</keyword>
<keyword id="KW-0276">Fatty acid metabolism</keyword>
<keyword id="KW-0443">Lipid metabolism</keyword>
<keyword id="KW-0539">Nucleus</keyword>
<keyword id="KW-0560">Oxidoreductase</keyword>
<keyword id="KW-1185">Reference proteome</keyword>
<gene>
    <name evidence="10" type="primary">FRM2</name>
    <name type="ordered locus">YCL026C-A</name>
    <name type="ORF">YCLX08C</name>
    <name type="ORF">YCLX8C</name>
</gene>
<reference key="1">
    <citation type="journal article" date="1992" name="Nature">
        <title>The complete DNA sequence of yeast chromosome III.</title>
        <authorList>
            <person name="Oliver S.G."/>
            <person name="van der Aart Q.J.M."/>
            <person name="Agostoni-Carbone M.L."/>
            <person name="Aigle M."/>
            <person name="Alberghina L."/>
            <person name="Alexandraki D."/>
            <person name="Antoine G."/>
            <person name="Anwar R."/>
            <person name="Ballesta J.P.G."/>
            <person name="Benit P."/>
            <person name="Berben G."/>
            <person name="Bergantino E."/>
            <person name="Biteau N."/>
            <person name="Bolle P.-A."/>
            <person name="Bolotin-Fukuhara M."/>
            <person name="Brown A."/>
            <person name="Brown A.J.P."/>
            <person name="Buhler J.-M."/>
            <person name="Carcano C."/>
            <person name="Carignani G."/>
            <person name="Cederberg H."/>
            <person name="Chanet R."/>
            <person name="Contreras R."/>
            <person name="Crouzet M."/>
            <person name="Daignan-Fornier B."/>
            <person name="Defoor E."/>
            <person name="Delgado M.D."/>
            <person name="Demolder J."/>
            <person name="Doira C."/>
            <person name="Dubois E."/>
            <person name="Dujon B."/>
            <person name="Duesterhoeft A."/>
            <person name="Erdmann D."/>
            <person name="Esteban M."/>
            <person name="Fabre F."/>
            <person name="Fairhead C."/>
            <person name="Faye G."/>
            <person name="Feldmann H."/>
            <person name="Fiers W."/>
            <person name="Francingues-Gaillard M.-C."/>
            <person name="Franco L."/>
            <person name="Frontali L."/>
            <person name="Fukuhara H."/>
            <person name="Fuller L.J."/>
            <person name="Galland P."/>
            <person name="Gent M.E."/>
            <person name="Gigot D."/>
            <person name="Gilliquet V."/>
            <person name="Glansdorff N."/>
            <person name="Goffeau A."/>
            <person name="Grenson M."/>
            <person name="Grisanti P."/>
            <person name="Grivell L.A."/>
            <person name="de Haan M."/>
            <person name="Haasemann M."/>
            <person name="Hatat D."/>
            <person name="Hoenicka J."/>
            <person name="Hegemann J.H."/>
            <person name="Herbert C.J."/>
            <person name="Hilger F."/>
            <person name="Hohmann S."/>
            <person name="Hollenberg C.P."/>
            <person name="Huse K."/>
            <person name="Iborra F."/>
            <person name="Indge K.J."/>
            <person name="Isono K."/>
            <person name="Jacq C."/>
            <person name="Jacquet M."/>
            <person name="James C.M."/>
            <person name="Jauniaux J.-C."/>
            <person name="Jia Y."/>
            <person name="Jimenez A."/>
            <person name="Kelly A."/>
            <person name="Kleinhans U."/>
            <person name="Kreisl P."/>
            <person name="Lanfranchi G."/>
            <person name="Lewis C."/>
            <person name="van der Linden C.G."/>
            <person name="Lucchini G."/>
            <person name="Lutzenkirchen K."/>
            <person name="Maat M.J."/>
            <person name="Mallet L."/>
            <person name="Mannhaupt G."/>
            <person name="Martegani E."/>
            <person name="Mathieu A."/>
            <person name="Maurer C.T.C."/>
            <person name="McConnell D."/>
            <person name="McKee R.A."/>
            <person name="Messenguy F."/>
            <person name="Mewes H.-W."/>
            <person name="Molemans F."/>
            <person name="Montague M.A."/>
            <person name="Muzi Falconi M."/>
            <person name="Navas L."/>
            <person name="Newlon C.S."/>
            <person name="Noone D."/>
            <person name="Pallier C."/>
            <person name="Panzeri L."/>
            <person name="Pearson B.M."/>
            <person name="Perea J."/>
            <person name="Philippsen P."/>
            <person name="Pierard A."/>
            <person name="Planta R.J."/>
            <person name="Plevani P."/>
            <person name="Poetsch B."/>
            <person name="Pohl F.M."/>
            <person name="Purnelle B."/>
            <person name="Ramezani Rad M."/>
            <person name="Rasmussen S.W."/>
            <person name="Raynal A."/>
            <person name="Remacha M.A."/>
            <person name="Richterich P."/>
            <person name="Roberts A.B."/>
            <person name="Rodriguez F."/>
            <person name="Sanz E."/>
            <person name="Schaaff-Gerstenschlaeger I."/>
            <person name="Scherens B."/>
            <person name="Schweitzer B."/>
            <person name="Shu Y."/>
            <person name="Skala J."/>
            <person name="Slonimski P.P."/>
            <person name="Sor F."/>
            <person name="Soustelle C."/>
            <person name="Spiegelberg R."/>
            <person name="Stateva L.I."/>
            <person name="Steensma H.Y."/>
            <person name="Steiner S."/>
            <person name="Thierry A."/>
            <person name="Thireos G."/>
            <person name="Tzermia M."/>
            <person name="Urrestarazu L.A."/>
            <person name="Valle G."/>
            <person name="Vetter I."/>
            <person name="van Vliet-Reedijk J.C."/>
            <person name="Voet M."/>
            <person name="Volckaert G."/>
            <person name="Vreken P."/>
            <person name="Wang H."/>
            <person name="Warmington J.R."/>
            <person name="von Wettstein D."/>
            <person name="Wicksteed B.L."/>
            <person name="Wilson C."/>
            <person name="Wurst H."/>
            <person name="Xu G."/>
            <person name="Yoshikawa A."/>
            <person name="Zimmermann F.K."/>
            <person name="Sgouros J.G."/>
        </authorList>
    </citation>
    <scope>NUCLEOTIDE SEQUENCE [LARGE SCALE GENOMIC DNA]</scope>
    <source>
        <strain>ATCC 204508 / S288c</strain>
    </source>
</reference>
<reference key="2">
    <citation type="submission" date="2001-06" db="EMBL/GenBank/DDBJ databases">
        <authorList>
            <person name="Valles G."/>
            <person name="Volckaerts G."/>
        </authorList>
    </citation>
    <scope>SEQUENCE REVISION TO 105-115</scope>
</reference>
<reference key="3">
    <citation type="journal article" date="2014" name="G3 (Bethesda)">
        <title>The reference genome sequence of Saccharomyces cerevisiae: Then and now.</title>
        <authorList>
            <person name="Engel S.R."/>
            <person name="Dietrich F.S."/>
            <person name="Fisk D.G."/>
            <person name="Binkley G."/>
            <person name="Balakrishnan R."/>
            <person name="Costanzo M.C."/>
            <person name="Dwight S.S."/>
            <person name="Hitz B.C."/>
            <person name="Karra K."/>
            <person name="Nash R.S."/>
            <person name="Weng S."/>
            <person name="Wong E.D."/>
            <person name="Lloyd P."/>
            <person name="Skrzypek M.S."/>
            <person name="Miyasato S.R."/>
            <person name="Simison M."/>
            <person name="Cherry J.M."/>
        </authorList>
    </citation>
    <scope>GENOME REANNOTATION</scope>
    <source>
        <strain>ATCC 204508 / S288c</strain>
    </source>
</reference>
<reference key="4">
    <citation type="journal article" date="1994" name="EMBO J.">
        <title>Yeast chromosome III: new gene functions.</title>
        <authorList>
            <person name="Koonin E.V."/>
            <person name="Bork P."/>
            <person name="Sander C."/>
        </authorList>
    </citation>
    <scope>IDENTIFICATION</scope>
    <scope>SIMILARITY</scope>
</reference>
<reference key="5">
    <citation type="journal article" date="1996" name="Yeast">
        <title>Identification of a class of Saccharomyces cerevisiae mutants defective in fatty acid repression of gene transcription and analysis of the frm2 gene.</title>
        <authorList>
            <person name="McHale M.W."/>
            <person name="Kroening K.D."/>
            <person name="Bernlohr D.A."/>
        </authorList>
    </citation>
    <scope>FUNCTION</scope>
</reference>
<reference key="6">
    <citation type="journal article" date="2003" name="Nature">
        <title>Global analysis of protein localization in budding yeast.</title>
        <authorList>
            <person name="Huh W.-K."/>
            <person name="Falvo J.V."/>
            <person name="Gerke L.C."/>
            <person name="Carroll A.S."/>
            <person name="Howson R.W."/>
            <person name="Weissman J.S."/>
            <person name="O'Shea E.K."/>
        </authorList>
    </citation>
    <scope>SUBCELLULAR LOCATION [LARGE SCALE ANALYSIS]</scope>
</reference>
<reference key="7">
    <citation type="journal article" date="2006" name="J. Agric. Food Chem.">
        <title>Mechanisms of patulin toxicity under conditions that inhibit yeast growth.</title>
        <authorList>
            <person name="Iwahashi Y."/>
            <person name="Hosoda H."/>
            <person name="Park J.H."/>
            <person name="Lee J.H."/>
            <person name="Suzuki Y."/>
            <person name="Kitagawa E."/>
            <person name="Murata S.M."/>
            <person name="Jwa N.S."/>
            <person name="Gu M.B."/>
            <person name="Iwahashi H."/>
        </authorList>
    </citation>
    <scope>INDUCTION</scope>
</reference>
<reference key="8">
    <citation type="journal article" date="2008" name="BMC Genomics">
        <title>Structure and properties of transcriptional networks driving selenite stress response in yeasts.</title>
        <authorList>
            <person name="Salin H."/>
            <person name="Fardeau V."/>
            <person name="Piccini E."/>
            <person name="Lelandais G."/>
            <person name="Tanty V."/>
            <person name="Lemoine S."/>
            <person name="Jacq C."/>
            <person name="Devaux F."/>
        </authorList>
    </citation>
    <scope>INDUCTION</scope>
    <scope>FUNCTION</scope>
</reference>
<reference key="9">
    <citation type="journal article" date="2008" name="Mol. Cell. Proteomics">
        <title>A multidimensional chromatography technology for in-depth phosphoproteome analysis.</title>
        <authorList>
            <person name="Albuquerque C.P."/>
            <person name="Smolka M.B."/>
            <person name="Payne S.H."/>
            <person name="Bafna V."/>
            <person name="Eng J."/>
            <person name="Zhou H."/>
        </authorList>
    </citation>
    <scope>IDENTIFICATION BY MASS SPECTROMETRY [LARGE SCALE ANALYSIS]</scope>
</reference>
<reference key="10">
    <citation type="journal article" date="2010" name="Yeast">
        <title>The role of two putative nitroreductases, Frm2p and Hbn1p, in the oxidative stress response in Saccharomyces cerevisiae.</title>
        <authorList>
            <person name="de Oliveira I.M."/>
            <person name="Zanotto-Filho A."/>
            <person name="Moreira J.C."/>
            <person name="Bonatto D."/>
            <person name="Henriques J.A."/>
        </authorList>
    </citation>
    <scope>FUNCTION</scope>
</reference>
<reference key="11">
    <citation type="journal article" date="2012" name="Biochem. Biophys. Res. Commun.">
        <title>Confirmation of Frm2 as a novel nitroreductase in Saccharomyces cerevisiae.</title>
        <authorList>
            <person name="Bang S.Y."/>
            <person name="Kim J.H."/>
            <person name="Lee P.Y."/>
            <person name="Bae K.H."/>
            <person name="Lee J.S."/>
            <person name="Kim P.S."/>
            <person name="Lee D.H."/>
            <person name="Myung P.K."/>
            <person name="Park B.C."/>
            <person name="Park S.G."/>
        </authorList>
    </citation>
    <scope>FUNCTION</scope>
    <scope>CATALYTIC ACTIVITY</scope>
</reference>
<reference evidence="12" key="12">
    <citation type="journal article" date="2015" name="Protein Sci.">
        <title>Crystal structure of the fungal nitroreductase Frm2 from Saccharomyces cerevisiae.</title>
        <authorList>
            <person name="Song H.N."/>
            <person name="Jeong D.G."/>
            <person name="Bang S.Y."/>
            <person name="Paek S.H."/>
            <person name="Park B.C."/>
            <person name="Park S.G."/>
            <person name="Woo E.J."/>
        </authorList>
    </citation>
    <scope>X-RAY CRYSTALLOGRAPHY (2.99 ANGSTROMS)</scope>
    <scope>FUNCTION</scope>
    <scope>CATALYTIC ACTIVITY</scope>
</reference>
<dbReference type="EC" id="1.7.1.9" evidence="6 7"/>
<dbReference type="EMBL" id="X59720">
    <property type="protein sequence ID" value="CAC42960.1"/>
    <property type="molecule type" value="Genomic_DNA"/>
</dbReference>
<dbReference type="EMBL" id="BK006937">
    <property type="protein sequence ID" value="DAA07459.1"/>
    <property type="molecule type" value="Genomic_DNA"/>
</dbReference>
<dbReference type="PIR" id="S53591">
    <property type="entry name" value="S53591"/>
</dbReference>
<dbReference type="RefSeq" id="NP_009904.2">
    <property type="nucleotide sequence ID" value="NM_001178713.1"/>
</dbReference>
<dbReference type="PDB" id="4URP">
    <property type="method" value="X-ray"/>
    <property type="resolution" value="2.99 A"/>
    <property type="chains" value="A/B=1-193"/>
</dbReference>
<dbReference type="PDBsum" id="4URP"/>
<dbReference type="SMR" id="P37261"/>
<dbReference type="BioGRID" id="30958">
    <property type="interactions" value="86"/>
</dbReference>
<dbReference type="DIP" id="DIP-3881N"/>
<dbReference type="FunCoup" id="P37261">
    <property type="interactions" value="50"/>
</dbReference>
<dbReference type="IntAct" id="P37261">
    <property type="interactions" value="3"/>
</dbReference>
<dbReference type="MINT" id="P37261"/>
<dbReference type="STRING" id="4932.YCL026C-A"/>
<dbReference type="iPTMnet" id="P37261"/>
<dbReference type="PaxDb" id="4932-YCL026C-A"/>
<dbReference type="PeptideAtlas" id="P37261"/>
<dbReference type="EnsemblFungi" id="YCL026C-A_mRNA">
    <property type="protein sequence ID" value="YCL026C-A"/>
    <property type="gene ID" value="YCL026C-A"/>
</dbReference>
<dbReference type="GeneID" id="850332"/>
<dbReference type="KEGG" id="sce:YCL026C-A"/>
<dbReference type="AGR" id="SGD:S000000589"/>
<dbReference type="SGD" id="S000000589">
    <property type="gene designation" value="FRM2"/>
</dbReference>
<dbReference type="VEuPathDB" id="FungiDB:YCL026C-A"/>
<dbReference type="eggNOG" id="ENOG502RYI9">
    <property type="taxonomic scope" value="Eukaryota"/>
</dbReference>
<dbReference type="HOGENOM" id="CLU_073125_1_0_1"/>
<dbReference type="InParanoid" id="P37261"/>
<dbReference type="OMA" id="ANRRSYY"/>
<dbReference type="OrthoDB" id="2138173at2759"/>
<dbReference type="BioCyc" id="YEAST:G3O-29320-MONOMER"/>
<dbReference type="BioGRID-ORCS" id="850332">
    <property type="hits" value="4 hits in 10 CRISPR screens"/>
</dbReference>
<dbReference type="EvolutionaryTrace" id="P37261"/>
<dbReference type="PRO" id="PR:P37261"/>
<dbReference type="Proteomes" id="UP000002311">
    <property type="component" value="Chromosome III"/>
</dbReference>
<dbReference type="RNAct" id="P37261">
    <property type="molecule type" value="protein"/>
</dbReference>
<dbReference type="GO" id="GO:0005737">
    <property type="term" value="C:cytoplasm"/>
    <property type="evidence" value="ECO:0007005"/>
    <property type="project" value="SGD"/>
</dbReference>
<dbReference type="GO" id="GO:0005634">
    <property type="term" value="C:nucleus"/>
    <property type="evidence" value="ECO:0007005"/>
    <property type="project" value="SGD"/>
</dbReference>
<dbReference type="GO" id="GO:0016651">
    <property type="term" value="F:oxidoreductase activity, acting on NAD(P)H"/>
    <property type="evidence" value="ECO:0000314"/>
    <property type="project" value="SGD"/>
</dbReference>
<dbReference type="GO" id="GO:0034599">
    <property type="term" value="P:cellular response to oxidative stress"/>
    <property type="evidence" value="ECO:0000315"/>
    <property type="project" value="SGD"/>
</dbReference>
<dbReference type="GO" id="GO:0006631">
    <property type="term" value="P:fatty acid metabolic process"/>
    <property type="evidence" value="ECO:0007669"/>
    <property type="project" value="UniProtKB-KW"/>
</dbReference>
<dbReference type="GO" id="GO:0045922">
    <property type="term" value="P:negative regulation of fatty acid metabolic process"/>
    <property type="evidence" value="ECO:0000315"/>
    <property type="project" value="SGD"/>
</dbReference>
<dbReference type="CDD" id="cd02140">
    <property type="entry name" value="Frm2-like"/>
    <property type="match status" value="1"/>
</dbReference>
<dbReference type="FunFam" id="3.40.109.10:FF:000001">
    <property type="entry name" value="Nitroreductase family"/>
    <property type="match status" value="1"/>
</dbReference>
<dbReference type="Gene3D" id="3.40.109.10">
    <property type="entry name" value="NADH Oxidase"/>
    <property type="match status" value="1"/>
</dbReference>
<dbReference type="InterPro" id="IPR033877">
    <property type="entry name" value="Frm2/Hbn1"/>
</dbReference>
<dbReference type="InterPro" id="IPR029479">
    <property type="entry name" value="Nitroreductase"/>
</dbReference>
<dbReference type="InterPro" id="IPR000415">
    <property type="entry name" value="Nitroreductase-like"/>
</dbReference>
<dbReference type="PANTHER" id="PTHR43035">
    <property type="entry name" value="FATTY ACID REPRESSION MUTANT PROTEIN 2-RELATED"/>
    <property type="match status" value="1"/>
</dbReference>
<dbReference type="PANTHER" id="PTHR43035:SF1">
    <property type="entry name" value="FATTY ACID REPRESSION MUTANT PROTEIN 2-RELATED"/>
    <property type="match status" value="1"/>
</dbReference>
<dbReference type="Pfam" id="PF00881">
    <property type="entry name" value="Nitroreductase"/>
    <property type="match status" value="1"/>
</dbReference>
<dbReference type="SUPFAM" id="SSF55469">
    <property type="entry name" value="FMN-dependent nitroreductase-like"/>
    <property type="match status" value="1"/>
</dbReference>
<accession>P37261</accession>
<accession>D6VQZ0</accession>
<accession>Q8NIM8</accession>
<feature type="chain" id="PRO_0000087340" description="nitroreductase FRM2">
    <location>
        <begin position="1"/>
        <end position="193"/>
    </location>
</feature>
<feature type="helix" evidence="13">
    <location>
        <begin position="7"/>
        <end position="12"/>
    </location>
</feature>
<feature type="helix" evidence="13">
    <location>
        <begin position="31"/>
        <end position="41"/>
    </location>
</feature>
<feature type="helix" evidence="13">
    <location>
        <begin position="47"/>
        <end position="49"/>
    </location>
</feature>
<feature type="strand" evidence="13">
    <location>
        <begin position="55"/>
        <end position="59"/>
    </location>
</feature>
<feature type="helix" evidence="13">
    <location>
        <begin position="60"/>
        <end position="73"/>
    </location>
</feature>
<feature type="turn" evidence="13">
    <location>
        <begin position="81"/>
        <end position="86"/>
    </location>
</feature>
<feature type="strand" evidence="13">
    <location>
        <begin position="87"/>
        <end position="89"/>
    </location>
</feature>
<feature type="strand" evidence="13">
    <location>
        <begin position="91"/>
        <end position="99"/>
    </location>
</feature>
<feature type="helix" evidence="13">
    <location>
        <begin position="100"/>
        <end position="109"/>
    </location>
</feature>
<feature type="helix" evidence="13">
    <location>
        <begin position="117"/>
        <end position="139"/>
    </location>
</feature>
<feature type="strand" evidence="13">
    <location>
        <begin position="142"/>
        <end position="144"/>
    </location>
</feature>
<feature type="helix" evidence="13">
    <location>
        <begin position="149"/>
        <end position="155"/>
    </location>
</feature>
<feature type="strand" evidence="13">
    <location>
        <begin position="158"/>
        <end position="160"/>
    </location>
</feature>
<feature type="strand" evidence="13">
    <location>
        <begin position="164"/>
        <end position="173"/>
    </location>
</feature>
<feature type="strand" evidence="13">
    <location>
        <begin position="188"/>
        <end position="190"/>
    </location>
</feature>
<comment type="function">
    <text evidence="4 5 6 7 8">Type II nitroreductase, able to reduce 4-nitroquinoline N-oxide (4-NQO) into 4-aminoquinoline-N-oxide (4-AQO) via 4-hydroxyaminoquinoline (4-HAQO), using NADH as reductant (PubMed:22687599, PubMed:25864423). involved in the oxidative stress response (PubMed:19904831). Plays a possible role in the metal stress response (PubMed:18627600). Involved in negative regulation of fatty acid metabolism (PubMed:8701605).</text>
</comment>
<comment type="catalytic activity">
    <reaction evidence="6 7">
        <text>4-(hydroxyamino)quinoline N-oxide + 2 NAD(+) + H2O = 4-nitroquinoline N-oxide + 2 NADH + 2 H(+)</text>
        <dbReference type="Rhea" id="RHEA:22480"/>
        <dbReference type="ChEBI" id="CHEBI:15377"/>
        <dbReference type="ChEBI" id="CHEBI:15378"/>
        <dbReference type="ChEBI" id="CHEBI:16907"/>
        <dbReference type="ChEBI" id="CHEBI:28469"/>
        <dbReference type="ChEBI" id="CHEBI:57540"/>
        <dbReference type="ChEBI" id="CHEBI:57945"/>
        <dbReference type="EC" id="1.7.1.9"/>
    </reaction>
    <physiologicalReaction direction="right-to-left" evidence="6 7">
        <dbReference type="Rhea" id="RHEA:22482"/>
    </physiologicalReaction>
</comment>
<comment type="cofactor">
    <cofactor evidence="1">
        <name>FMN</name>
        <dbReference type="ChEBI" id="CHEBI:58210"/>
    </cofactor>
    <text evidence="1">Binds 1 FMN per subunit.</text>
</comment>
<comment type="subcellular location">
    <subcellularLocation>
        <location evidence="2">Cytoplasm</location>
    </subcellularLocation>
    <subcellularLocation>
        <location evidence="2">Nucleus</location>
    </subcellularLocation>
</comment>
<comment type="induction">
    <text evidence="3 4">Expression is inducced by cadmium and selenite (PubMed:18627600). Expression is also induced in the presence of the mycotoxin patulin (PubMed:16506856).</text>
</comment>
<comment type="similarity">
    <text evidence="11">Belongs to the nitroreductase family.</text>
</comment>
<sequence length="193" mass="21232">MSPTGNYLNAITNRRTIYNLKPELPQGVGLDDVKRTVHVILKNTPTAFNSQVNRAVIIVGDTHKRIWDAVASAMPTAEAKKRPESCRDEAYGSVIFFTDEGPTEKLQRDFPALAAAFPTCAAHTTGAVQIQSWTALELLGLGANLQHYNDYVKSALPQDVPIAWTVQSQLVFGVPTALPEEKTFINNVINVYH</sequence>
<protein>
    <recommendedName>
        <fullName evidence="9">nitroreductase FRM2</fullName>
        <ecNumber evidence="6 7">1.7.1.9</ecNumber>
    </recommendedName>
    <alternativeName>
        <fullName evidence="10">Fatty acid repression mutant protein 2</fullName>
    </alternativeName>
</protein>
<organism>
    <name type="scientific">Saccharomyces cerevisiae (strain ATCC 204508 / S288c)</name>
    <name type="common">Baker's yeast</name>
    <dbReference type="NCBI Taxonomy" id="559292"/>
    <lineage>
        <taxon>Eukaryota</taxon>
        <taxon>Fungi</taxon>
        <taxon>Dikarya</taxon>
        <taxon>Ascomycota</taxon>
        <taxon>Saccharomycotina</taxon>
        <taxon>Saccharomycetes</taxon>
        <taxon>Saccharomycetales</taxon>
        <taxon>Saccharomycetaceae</taxon>
        <taxon>Saccharomyces</taxon>
    </lineage>
</organism>
<proteinExistence type="evidence at protein level"/>
<evidence type="ECO:0000250" key="1">
    <source>
        <dbReference type="UniProtKB" id="A0R6D0"/>
    </source>
</evidence>
<evidence type="ECO:0000269" key="2">
    <source>
    </source>
</evidence>
<evidence type="ECO:0000269" key="3">
    <source>
    </source>
</evidence>
<evidence type="ECO:0000269" key="4">
    <source>
    </source>
</evidence>
<evidence type="ECO:0000269" key="5">
    <source>
    </source>
</evidence>
<evidence type="ECO:0000269" key="6">
    <source>
    </source>
</evidence>
<evidence type="ECO:0000269" key="7">
    <source>
    </source>
</evidence>
<evidence type="ECO:0000269" key="8">
    <source>
    </source>
</evidence>
<evidence type="ECO:0000303" key="9">
    <source>
    </source>
</evidence>
<evidence type="ECO:0000303" key="10">
    <source>
    </source>
</evidence>
<evidence type="ECO:0000305" key="11"/>
<evidence type="ECO:0007744" key="12">
    <source>
        <dbReference type="PDB" id="4URP"/>
    </source>
</evidence>
<evidence type="ECO:0007829" key="13">
    <source>
        <dbReference type="PDB" id="4URP"/>
    </source>
</evidence>